<comment type="function">
    <text evidence="1">involved in nervous system development, important for striatal morphology and motor regulation.</text>
</comment>
<comment type="disease" evidence="4">
    <disease id="DI-04203">
        <name>Acromelic frontonasal dysostosis</name>
        <acronym>AFND</acronym>
        <description>A rare variant form of frontonasal dysplasia, an array of abnormalities affecting the eyes, forehead and nose and linked to midfacial dysraphia. The clinical picture is highly variable. Major findings include true ocular hypertelorism, broadening of the nasal root, median facial cleft affecting the nose and/or upper lip and palate, unilateral or bilateral clefting of the alae nasi, lack of formation of the nasal tip, anterior cranium bifidum occultum, a V-shaped or widow's peak frontal hairline. AFND is characterized by the association of frontonasal malformations with various combinations of polydactyly, tibial hypoplasia, epibulbar dermoid, encephalocoele, corpus callosum agenesis and Dandy-Walker malformation.</description>
        <dbReference type="MIM" id="603671"/>
    </disease>
    <text>The disease is caused by variants affecting the gene represented in this entry.</text>
</comment>
<comment type="disease" evidence="6">
    <disease id="DI-05190">
        <name>Neurodevelopmental disorder with movement abnormalities, abnormal gait, and autistic features</name>
        <acronym>NEDMAGA</acronym>
        <description>An autosomal dominant neurodevelopmental disorder characterized by infantile-onset global developmental delay, severe to profound intellectual disability, mildly delayed walking with broad-based and unsteady gait, and absence of meaningful language. Patients have features of autism, with repetitive behaviors and poor communication, but usually are socially reactive and have a happy demeanor. More variable neurologic features include mild seizures, spasticity, and peripheral neuropathy.</description>
        <dbReference type="MIM" id="617865"/>
    </disease>
    <text>The disease is caused by variants affecting the gene represented in this entry.</text>
</comment>
<evidence type="ECO:0000250" key="1">
    <source>
        <dbReference type="UniProtKB" id="Q80TB7"/>
    </source>
</evidence>
<evidence type="ECO:0000255" key="2">
    <source>
        <dbReference type="PROSITE-ProRule" id="PRU00325"/>
    </source>
</evidence>
<evidence type="ECO:0000256" key="3">
    <source>
        <dbReference type="SAM" id="MobiDB-lite"/>
    </source>
</evidence>
<evidence type="ECO:0000269" key="4">
    <source>
    </source>
</evidence>
<evidence type="ECO:0000269" key="5">
    <source>
    </source>
</evidence>
<evidence type="ECO:0000269" key="6">
    <source>
    </source>
</evidence>
<evidence type="ECO:0000303" key="7">
    <source>
    </source>
</evidence>
<evidence type="ECO:0000312" key="8">
    <source>
        <dbReference type="HGNC" id="HGNC:29316"/>
    </source>
</evidence>
<accession>Q9HCJ5</accession>
<organism>
    <name type="scientific">Homo sapiens</name>
    <name type="common">Human</name>
    <dbReference type="NCBI Taxonomy" id="9606"/>
    <lineage>
        <taxon>Eukaryota</taxon>
        <taxon>Metazoa</taxon>
        <taxon>Chordata</taxon>
        <taxon>Craniata</taxon>
        <taxon>Vertebrata</taxon>
        <taxon>Euteleostomi</taxon>
        <taxon>Mammalia</taxon>
        <taxon>Eutheria</taxon>
        <taxon>Euarchontoglires</taxon>
        <taxon>Primates</taxon>
        <taxon>Haplorrhini</taxon>
        <taxon>Catarrhini</taxon>
        <taxon>Hominidae</taxon>
        <taxon>Homo</taxon>
    </lineage>
</organism>
<protein>
    <recommendedName>
        <fullName>Zinc finger SWIM domain-containing protein 6</fullName>
    </recommendedName>
</protein>
<feature type="chain" id="PRO_0000223105" description="Zinc finger SWIM domain-containing protein 6">
    <location>
        <begin position="1"/>
        <end position="1215"/>
    </location>
</feature>
<feature type="zinc finger region" description="SWIM-type" evidence="2">
    <location>
        <begin position="246"/>
        <end position="283"/>
    </location>
</feature>
<feature type="region of interest" description="Disordered" evidence="3">
    <location>
        <begin position="1"/>
        <end position="46"/>
    </location>
</feature>
<feature type="region of interest" description="Disordered" evidence="3">
    <location>
        <begin position="133"/>
        <end position="161"/>
    </location>
</feature>
<feature type="compositionally biased region" description="Gly residues" evidence="3">
    <location>
        <begin position="18"/>
        <end position="38"/>
    </location>
</feature>
<feature type="compositionally biased region" description="Gly residues" evidence="3">
    <location>
        <begin position="133"/>
        <end position="155"/>
    </location>
</feature>
<feature type="sequence variant" id="VAR_076431" evidence="5">
    <original>S</original>
    <variation>R</variation>
    <location>
        <position position="763"/>
    </location>
</feature>
<feature type="sequence variant" id="VAR_080756" description="In NEDMAGA." evidence="6">
    <location>
        <begin position="913"/>
        <end position="1215"/>
    </location>
</feature>
<feature type="sequence variant" id="VAR_071802" description="In AFND; dbSNP:rs587777695." evidence="4">
    <original>R</original>
    <variation>W</variation>
    <location>
        <position position="1163"/>
    </location>
</feature>
<gene>
    <name evidence="7 8" type="primary">ZSWIM6</name>
    <name type="synonym">KIAA1577</name>
</gene>
<proteinExistence type="evidence at protein level"/>
<reference key="1">
    <citation type="journal article" date="2004" name="Nature">
        <title>The DNA sequence and comparative analysis of human chromosome 5.</title>
        <authorList>
            <person name="Schmutz J."/>
            <person name="Martin J."/>
            <person name="Terry A."/>
            <person name="Couronne O."/>
            <person name="Grimwood J."/>
            <person name="Lowry S."/>
            <person name="Gordon L.A."/>
            <person name="Scott D."/>
            <person name="Xie G."/>
            <person name="Huang W."/>
            <person name="Hellsten U."/>
            <person name="Tran-Gyamfi M."/>
            <person name="She X."/>
            <person name="Prabhakar S."/>
            <person name="Aerts A."/>
            <person name="Altherr M."/>
            <person name="Bajorek E."/>
            <person name="Black S."/>
            <person name="Branscomb E."/>
            <person name="Caoile C."/>
            <person name="Challacombe J.F."/>
            <person name="Chan Y.M."/>
            <person name="Denys M."/>
            <person name="Detter J.C."/>
            <person name="Escobar J."/>
            <person name="Flowers D."/>
            <person name="Fotopulos D."/>
            <person name="Glavina T."/>
            <person name="Gomez M."/>
            <person name="Gonzales E."/>
            <person name="Goodstein D."/>
            <person name="Grigoriev I."/>
            <person name="Groza M."/>
            <person name="Hammon N."/>
            <person name="Hawkins T."/>
            <person name="Haydu L."/>
            <person name="Israni S."/>
            <person name="Jett J."/>
            <person name="Kadner K."/>
            <person name="Kimball H."/>
            <person name="Kobayashi A."/>
            <person name="Lopez F."/>
            <person name="Lou Y."/>
            <person name="Martinez D."/>
            <person name="Medina C."/>
            <person name="Morgan J."/>
            <person name="Nandkeshwar R."/>
            <person name="Noonan J.P."/>
            <person name="Pitluck S."/>
            <person name="Pollard M."/>
            <person name="Predki P."/>
            <person name="Priest J."/>
            <person name="Ramirez L."/>
            <person name="Retterer J."/>
            <person name="Rodriguez A."/>
            <person name="Rogers S."/>
            <person name="Salamov A."/>
            <person name="Salazar A."/>
            <person name="Thayer N."/>
            <person name="Tice H."/>
            <person name="Tsai M."/>
            <person name="Ustaszewska A."/>
            <person name="Vo N."/>
            <person name="Wheeler J."/>
            <person name="Wu K."/>
            <person name="Yang J."/>
            <person name="Dickson M."/>
            <person name="Cheng J.-F."/>
            <person name="Eichler E.E."/>
            <person name="Olsen A."/>
            <person name="Pennacchio L.A."/>
            <person name="Rokhsar D.S."/>
            <person name="Richardson P."/>
            <person name="Lucas S.M."/>
            <person name="Myers R.M."/>
            <person name="Rubin E.M."/>
        </authorList>
    </citation>
    <scope>NUCLEOTIDE SEQUENCE [LARGE SCALE GENOMIC DNA]</scope>
</reference>
<reference key="2">
    <citation type="journal article" date="2000" name="DNA Res.">
        <title>Prediction of the coding sequences of unidentified human genes. XVIII. The complete sequences of 100 new cDNA clones from brain which code for large proteins in vitro.</title>
        <authorList>
            <person name="Nagase T."/>
            <person name="Kikuno R."/>
            <person name="Nakayama M."/>
            <person name="Hirosawa M."/>
            <person name="Ohara O."/>
        </authorList>
    </citation>
    <scope>NUCLEOTIDE SEQUENCE [LARGE SCALE MRNA] OF 473-1215</scope>
    <source>
        <tissue>Brain</tissue>
    </source>
</reference>
<reference key="3">
    <citation type="journal article" date="2014" name="Am. J. Hum. Genet.">
        <title>Exome Sequencing identifies a recurrent de novo ZSWIM6 mutation associated with acromelic frontonasal dysostosis.</title>
        <authorList>
            <consortium name="University of Washington Center for Mendelian Genomics"/>
            <person name="Smith J.D."/>
            <person name="Hing A.V."/>
            <person name="Clarke C.M."/>
            <person name="Johnson N.M."/>
            <person name="Perez F.A."/>
            <person name="Park S.S."/>
            <person name="Horst J.A."/>
            <person name="Mecham B."/>
            <person name="Maves L."/>
            <person name="Nickerson D.A."/>
            <person name="Cunningham M.L."/>
        </authorList>
    </citation>
    <scope>VARIANT AFND TRP-1163</scope>
</reference>
<reference key="4">
    <citation type="journal article" date="2016" name="J. Med. Genet.">
        <title>Homozygous missense mutation in the LMAN2L gene segregates with intellectual disability in a large consanguineous Pakistani family.</title>
        <authorList>
            <person name="Rafiullah R."/>
            <person name="Aslamkhan M."/>
            <person name="Paramasivam N."/>
            <person name="Thiel C."/>
            <person name="Mustafa G."/>
            <person name="Wiemann S."/>
            <person name="Schlesner M."/>
            <person name="Wade R.C."/>
            <person name="Rappold G.A."/>
            <person name="Berkel S."/>
        </authorList>
    </citation>
    <scope>VARIANT ARG-763</scope>
</reference>
<reference key="5">
    <citation type="journal article" date="2017" name="Am. J. Hum. Genet.">
        <title>A Recurrent De Novo Nonsense Variant in ZSWIM6 Results in Severe Intellectual Disability without Frontonasal or Limb Malformations.</title>
        <authorList>
            <consortium name="DDD Study"/>
            <person name="Palmer E.E."/>
            <person name="Kumar R."/>
            <person name="Gordon C.T."/>
            <person name="Shaw M."/>
            <person name="Hubert L."/>
            <person name="Carroll R."/>
            <person name="Rio M."/>
            <person name="Murray L."/>
            <person name="Leffler M."/>
            <person name="Dudding-Byth T."/>
            <person name="Oufadem M."/>
            <person name="Lalani S.R."/>
            <person name="Lewis A.M."/>
            <person name="Xia F."/>
            <person name="Tam A."/>
            <person name="Webster R."/>
            <person name="Brammah S."/>
            <person name="Filippini F."/>
            <person name="Pollard J."/>
            <person name="Spies J."/>
            <person name="Minoche A.E."/>
            <person name="Cowley M.J."/>
            <person name="Risen S."/>
            <person name="Powell-Hamilton N.N."/>
            <person name="Tusi J.E."/>
            <person name="Immken L."/>
            <person name="Nagakura H."/>
            <person name="Bole-Feysot C."/>
            <person name="Nitschke P."/>
            <person name="Garrigue A."/>
            <person name="de Saint Basile G."/>
            <person name="Kivuva E."/>
            <person name="Scott R.H."/>
            <person name="Rendon A."/>
            <person name="Munnich A."/>
            <person name="Newman W."/>
            <person name="Kerr B."/>
            <person name="Besmond C."/>
            <person name="Rosenfeld J.A."/>
            <person name="Amiel J."/>
            <person name="Field M."/>
            <person name="Gecz J."/>
        </authorList>
    </citation>
    <scope>INVOLVEMENT IN NEDMAGA</scope>
    <scope>VARIANT NEDMAGA 913-ARG--GLY-1215 DEL</scope>
</reference>
<name>ZSWM6_HUMAN</name>
<dbReference type="EMBL" id="AC122718">
    <property type="status" value="NOT_ANNOTATED_CDS"/>
    <property type="molecule type" value="Genomic_DNA"/>
</dbReference>
<dbReference type="EMBL" id="AC008836">
    <property type="status" value="NOT_ANNOTATED_CDS"/>
    <property type="molecule type" value="Genomic_DNA"/>
</dbReference>
<dbReference type="EMBL" id="AB046797">
    <property type="protein sequence ID" value="BAB13403.1"/>
    <property type="molecule type" value="mRNA"/>
</dbReference>
<dbReference type="CCDS" id="CCDS47215.1"/>
<dbReference type="RefSeq" id="NP_065979.1">
    <property type="nucleotide sequence ID" value="NM_020928.2"/>
</dbReference>
<dbReference type="BioGRID" id="121714">
    <property type="interactions" value="8"/>
</dbReference>
<dbReference type="FunCoup" id="Q9HCJ5">
    <property type="interactions" value="202"/>
</dbReference>
<dbReference type="IntAct" id="Q9HCJ5">
    <property type="interactions" value="5"/>
</dbReference>
<dbReference type="STRING" id="9606.ENSP00000252744"/>
<dbReference type="GlyGen" id="Q9HCJ5">
    <property type="glycosylation" value="2 sites, 1 O-linked glycan (1 site)"/>
</dbReference>
<dbReference type="iPTMnet" id="Q9HCJ5"/>
<dbReference type="PhosphoSitePlus" id="Q9HCJ5"/>
<dbReference type="BioMuta" id="ZSWIM6"/>
<dbReference type="DMDM" id="229462808"/>
<dbReference type="jPOST" id="Q9HCJ5"/>
<dbReference type="MassIVE" id="Q9HCJ5"/>
<dbReference type="PaxDb" id="9606-ENSP00000252744"/>
<dbReference type="PeptideAtlas" id="Q9HCJ5"/>
<dbReference type="ProteomicsDB" id="81740"/>
<dbReference type="Antibodypedia" id="50791">
    <property type="antibodies" value="81 antibodies from 14 providers"/>
</dbReference>
<dbReference type="DNASU" id="57688"/>
<dbReference type="Ensembl" id="ENST00000252744.6">
    <property type="protein sequence ID" value="ENSP00000252744.5"/>
    <property type="gene ID" value="ENSG00000130449.6"/>
</dbReference>
<dbReference type="GeneID" id="57688"/>
<dbReference type="KEGG" id="hsa:57688"/>
<dbReference type="MANE-Select" id="ENST00000252744.6">
    <property type="protein sequence ID" value="ENSP00000252744.5"/>
    <property type="RefSeq nucleotide sequence ID" value="NM_020928.2"/>
    <property type="RefSeq protein sequence ID" value="NP_065979.1"/>
</dbReference>
<dbReference type="UCSC" id="uc003jsr.4">
    <property type="organism name" value="human"/>
</dbReference>
<dbReference type="AGR" id="HGNC:29316"/>
<dbReference type="CTD" id="57688"/>
<dbReference type="DisGeNET" id="57688"/>
<dbReference type="GeneCards" id="ZSWIM6"/>
<dbReference type="HGNC" id="HGNC:29316">
    <property type="gene designation" value="ZSWIM6"/>
</dbReference>
<dbReference type="HPA" id="ENSG00000130449">
    <property type="expression patterns" value="Low tissue specificity"/>
</dbReference>
<dbReference type="MalaCards" id="ZSWIM6"/>
<dbReference type="MIM" id="603671">
    <property type="type" value="phenotype"/>
</dbReference>
<dbReference type="MIM" id="615951">
    <property type="type" value="gene"/>
</dbReference>
<dbReference type="MIM" id="617865">
    <property type="type" value="phenotype"/>
</dbReference>
<dbReference type="neXtProt" id="NX_Q9HCJ5"/>
<dbReference type="OpenTargets" id="ENSG00000130449"/>
<dbReference type="Orphanet" id="1827">
    <property type="disease" value="Acromelic frontonasal dysplasia"/>
</dbReference>
<dbReference type="PharmGKB" id="PA134910181"/>
<dbReference type="VEuPathDB" id="HostDB:ENSG00000130449"/>
<dbReference type="eggNOG" id="KOG3615">
    <property type="taxonomic scope" value="Eukaryota"/>
</dbReference>
<dbReference type="GeneTree" id="ENSGT00940000155496"/>
<dbReference type="HOGENOM" id="CLU_005301_1_0_1"/>
<dbReference type="InParanoid" id="Q9HCJ5"/>
<dbReference type="OMA" id="HCKSLEY"/>
<dbReference type="OrthoDB" id="10013584at2759"/>
<dbReference type="PAN-GO" id="Q9HCJ5">
    <property type="GO annotations" value="1 GO annotation based on evolutionary models"/>
</dbReference>
<dbReference type="PhylomeDB" id="Q9HCJ5"/>
<dbReference type="TreeFam" id="TF324881"/>
<dbReference type="PathwayCommons" id="Q9HCJ5"/>
<dbReference type="SignaLink" id="Q9HCJ5"/>
<dbReference type="BioGRID-ORCS" id="57688">
    <property type="hits" value="16 hits in 1162 CRISPR screens"/>
</dbReference>
<dbReference type="ChiTaRS" id="ZSWIM6">
    <property type="organism name" value="human"/>
</dbReference>
<dbReference type="GenomeRNAi" id="57688"/>
<dbReference type="Pharos" id="Q9HCJ5">
    <property type="development level" value="Tbio"/>
</dbReference>
<dbReference type="PRO" id="PR:Q9HCJ5"/>
<dbReference type="Proteomes" id="UP000005640">
    <property type="component" value="Chromosome 5"/>
</dbReference>
<dbReference type="RNAct" id="Q9HCJ5">
    <property type="molecule type" value="protein"/>
</dbReference>
<dbReference type="Bgee" id="ENSG00000130449">
    <property type="expression patterns" value="Expressed in oviduct epithelium and 188 other cell types or tissues"/>
</dbReference>
<dbReference type="GO" id="GO:0031462">
    <property type="term" value="C:Cul2-RING ubiquitin ligase complex"/>
    <property type="evidence" value="ECO:0000318"/>
    <property type="project" value="GO_Central"/>
</dbReference>
<dbReference type="GO" id="GO:0008270">
    <property type="term" value="F:zinc ion binding"/>
    <property type="evidence" value="ECO:0007669"/>
    <property type="project" value="UniProtKB-KW"/>
</dbReference>
<dbReference type="GO" id="GO:0021773">
    <property type="term" value="P:striatal medium spiny neuron differentiation"/>
    <property type="evidence" value="ECO:0000250"/>
    <property type="project" value="UniProtKB"/>
</dbReference>
<dbReference type="InterPro" id="IPR007527">
    <property type="entry name" value="Znf_SWIM"/>
</dbReference>
<dbReference type="InterPro" id="IPR048370">
    <property type="entry name" value="ZSWIM4-8_C"/>
</dbReference>
<dbReference type="PANTHER" id="PTHR22619">
    <property type="entry name" value="ZINC FINGER SWIM DOMAIN CONTAINING PROTEIN 4, 5, 6"/>
    <property type="match status" value="1"/>
</dbReference>
<dbReference type="PANTHER" id="PTHR22619:SF3">
    <property type="entry name" value="ZINC FINGER SWIM DOMAIN-CONTAINING PROTEIN 6"/>
    <property type="match status" value="1"/>
</dbReference>
<dbReference type="Pfam" id="PF21055">
    <property type="entry name" value="ZSWIM4-8_C"/>
    <property type="match status" value="1"/>
</dbReference>
<dbReference type="PROSITE" id="PS50966">
    <property type="entry name" value="ZF_SWIM"/>
    <property type="match status" value="1"/>
</dbReference>
<keyword id="KW-0225">Disease variant</keyword>
<keyword id="KW-0242">Dwarfism</keyword>
<keyword id="KW-0991">Intellectual disability</keyword>
<keyword id="KW-0479">Metal-binding</keyword>
<keyword id="KW-0524">Neurogenesis</keyword>
<keyword id="KW-1267">Proteomics identification</keyword>
<keyword id="KW-1185">Reference proteome</keyword>
<keyword id="KW-0862">Zinc</keyword>
<keyword id="KW-0863">Zinc-finger</keyword>
<sequence>MAERGQQPPPAKRLCCRPGGGGGGGGSSGGGGGAGGGYSSACRPGPRAGGAAAAAACGGGAALGLLPPGKTQSPESLLDIAARRVAEKWPFQRVEERFERIPEPVQRRIVYWSFPRSEREICMYSSFNTGGGAAGGPGDDSGGGGGAGGGGGGGSSSSPAATSAAATSAAAAAAAAAAAAAAAAGAGAPSVGAAGAADGGDETRLPFRRGIALLESGCVDNVLQVGFHLSGTVTEPAIQSEPETVCNVAISFDRCKITSVTCSCGNKDIFYCAHVVALSLYRIRKPDQVKLHLPISETLFQMNRDQLQKFVQYLITVHHTEVLPTAQKLADEILSQNSEINQVHGAPDPTAGASIDDENCWHLDEEQVQEQVKLFLSQGGYHGSGKQLNLLFAKVREMLKMRDSNGARMLTLITEQFMADPRLSLWRQQGTAMTDKYRQLWDELGALWMCIVLNPHCKLEQKASWLKQLKKWNSVDVCPWEDGNHGSELPNLTNALPQGANANQDSSNRPHRTVFTRAIEACDLHWQDSHLQHIISSDLYTNYCYHDDTENSLFDSRGWPLWHEHVPTACARVDALRSHGYPREALRLAIAIVNTLRRQQQKQLEMFRTQKKELPHKNITSITNLEGWVGHPLDPVGTLFSSLMEACRIDDENLSGFSDFTENMGQCKSLEYQHLPAHKFLEEGESYLTLAVEVALIGLGQQRIMPDGLYTQEKVCRNEEQLISKLQEIELDDTLVKIFRKQAVFLLEAGPYSGLGEIIHRESVPMHTFAKYLFTSLLPHDAELAYKIALRAMRLLVLESTAPSGDLTRPHHIASVVPNRYPRWFTLSHIESQQCELASTMLTAAKGDVRRLETVLESIQKNIHSSSHIFKLAQDAFKIATLMDSLPDITLLKVSLELGLQVMRMTLSTLNWRRREMVRWLVTCATEVGVYALDSIMQTWFTLFTPTEATSIVATTVMSNSTIVRLHLDCHQQEKLASSARTLALQCAMKDPQNCALSALTLCEKDHIAFETAYQIVLDAATTGMSYTQLFTIARYMEHRGYPMRAYKLATLAMTHLNLSYNQDTHPAINDVLWACALSHSLGKNELAAIIPLVVKSVKCATVLSDILRRCTLTTPGMVGLHGRRNSGKLMSLDKAPLRQLLDATIGAYINTTHSRLTHISPRHYSEFIEFLSKARETFLMAHDGHIQFTQFIDNLKQIYKGKKKLMMLVRERFG</sequence>